<accession>P27691</accession>
<keyword id="KW-0281">Fimbrium</keyword>
<keyword id="KW-0472">Membrane</keyword>
<keyword id="KW-0488">Methylation</keyword>
<keyword id="KW-0812">Transmembrane</keyword>
<keyword id="KW-1133">Transmembrane helix</keyword>
<sequence>MKSLQKGFTLIELMIVVAIIGILAAFAIPAYNDYIARSQAAEGVSLADGLKVRIAENLQDGECKGPDADPASGVVGNQDKGKYALAEIKGDYDASKTDAGDPNGCQVEITYGQGTAEGKISKLITGKKLVLEQLVNGSFIAGAGTDLADKFIPNAVKVKK</sequence>
<evidence type="ECO:0000255" key="1"/>
<evidence type="ECO:0000255" key="2">
    <source>
        <dbReference type="PROSITE-ProRule" id="PRU01070"/>
    </source>
</evidence>
<evidence type="ECO:0000305" key="3"/>
<feature type="propeptide" id="PRO_0000024121" description="Leader sequence" evidence="2">
    <location>
        <begin position="1"/>
        <end position="7"/>
    </location>
</feature>
<feature type="chain" id="PRO_0000024122" description="Fimbrial protein">
    <location>
        <begin position="8"/>
        <end position="160"/>
    </location>
</feature>
<feature type="transmembrane region" description="Helical" evidence="1">
    <location>
        <begin position="8"/>
        <end position="28"/>
    </location>
</feature>
<feature type="modified residue" description="N-methylphenylalanine" evidence="2">
    <location>
        <position position="8"/>
    </location>
</feature>
<protein>
    <recommendedName>
        <fullName>Fimbrial protein</fullName>
    </recommendedName>
    <alternativeName>
        <fullName>Pilin</fullName>
    </alternativeName>
    <alternativeName>
        <fullName>Serogroup B1/AC127</fullName>
    </alternativeName>
</protein>
<proteinExistence type="inferred from homology"/>
<reference key="1">
    <citation type="journal article" date="1991" name="Gene">
        <title>Sequence of fimbrial subunit-encoding genes from virulent and benign isolates of Dichelobacter (Bacteroides) nodosus.</title>
        <authorList>
            <person name="Billington S.J."/>
            <person name="Rood J.I."/>
        </authorList>
    </citation>
    <scope>NUCLEOTIDE SEQUENCE [GENOMIC DNA]</scope>
    <source>
        <strain>Serogroup B1 isolate AC127</strain>
    </source>
</reference>
<gene>
    <name type="primary">fimA</name>
</gene>
<organism>
    <name type="scientific">Dichelobacter nodosus</name>
    <name type="common">Bacteroides nodosus</name>
    <dbReference type="NCBI Taxonomy" id="870"/>
    <lineage>
        <taxon>Bacteria</taxon>
        <taxon>Pseudomonadati</taxon>
        <taxon>Pseudomonadota</taxon>
        <taxon>Gammaproteobacteria</taxon>
        <taxon>Cardiobacteriales</taxon>
        <taxon>Cardiobacteriaceae</taxon>
        <taxon>Dichelobacter</taxon>
    </lineage>
</organism>
<comment type="subunit">
    <text>The pili are polar flexible filaments of about 5.4 nanometers diameter and 2.5 micrometers average length; they consist of only a single polypeptide chain arranged in a helical configuration of five subunits per turn in the assembled pilus.</text>
</comment>
<comment type="subcellular location">
    <subcellularLocation>
        <location>Fimbrium</location>
    </subcellularLocation>
    <subcellularLocation>
        <location evidence="1">Membrane</location>
        <topology evidence="1">Single-pass membrane protein</topology>
    </subcellularLocation>
</comment>
<comment type="similarity">
    <text evidence="3">Belongs to the N-Me-Phe pilin family.</text>
</comment>
<dbReference type="EMBL" id="M37472">
    <property type="protein sequence ID" value="AAA23340.1"/>
    <property type="molecule type" value="Genomic_DNA"/>
</dbReference>
<dbReference type="PIR" id="PS0419">
    <property type="entry name" value="PS0419"/>
</dbReference>
<dbReference type="SMR" id="P27691"/>
<dbReference type="GO" id="GO:0016020">
    <property type="term" value="C:membrane"/>
    <property type="evidence" value="ECO:0007669"/>
    <property type="project" value="UniProtKB-SubCell"/>
</dbReference>
<dbReference type="GO" id="GO:0009289">
    <property type="term" value="C:pilus"/>
    <property type="evidence" value="ECO:0007669"/>
    <property type="project" value="UniProtKB-SubCell"/>
</dbReference>
<dbReference type="GO" id="GO:0007155">
    <property type="term" value="P:cell adhesion"/>
    <property type="evidence" value="ECO:0007669"/>
    <property type="project" value="InterPro"/>
</dbReference>
<dbReference type="Gene3D" id="3.30.700.10">
    <property type="entry name" value="Glycoprotein, Type 4 Pilin"/>
    <property type="match status" value="1"/>
</dbReference>
<dbReference type="InterPro" id="IPR012902">
    <property type="entry name" value="N_methyl_site"/>
</dbReference>
<dbReference type="InterPro" id="IPR001082">
    <property type="entry name" value="Pilin"/>
</dbReference>
<dbReference type="InterPro" id="IPR045584">
    <property type="entry name" value="Pilin-like"/>
</dbReference>
<dbReference type="NCBIfam" id="TIGR02532">
    <property type="entry name" value="IV_pilin_GFxxxE"/>
    <property type="match status" value="1"/>
</dbReference>
<dbReference type="Pfam" id="PF07963">
    <property type="entry name" value="N_methyl"/>
    <property type="match status" value="1"/>
</dbReference>
<dbReference type="Pfam" id="PF00114">
    <property type="entry name" value="Pilin"/>
    <property type="match status" value="1"/>
</dbReference>
<dbReference type="SUPFAM" id="SSF54523">
    <property type="entry name" value="Pili subunits"/>
    <property type="match status" value="1"/>
</dbReference>
<dbReference type="PROSITE" id="PS00409">
    <property type="entry name" value="PROKAR_NTER_METHYL"/>
    <property type="match status" value="1"/>
</dbReference>
<name>FMA7_DICNO</name>